<keyword id="KW-0067">ATP-binding</keyword>
<keyword id="KW-0418">Kinase</keyword>
<keyword id="KW-0545">Nucleotide biosynthesis</keyword>
<keyword id="KW-0547">Nucleotide-binding</keyword>
<keyword id="KW-1185">Reference proteome</keyword>
<keyword id="KW-0808">Transferase</keyword>
<feature type="chain" id="PRO_0000155402" description="Probable thymidylate kinase">
    <location>
        <begin position="1"/>
        <end position="193"/>
    </location>
</feature>
<feature type="binding site" evidence="1">
    <location>
        <begin position="7"/>
        <end position="14"/>
    </location>
    <ligand>
        <name>ATP</name>
        <dbReference type="ChEBI" id="CHEBI:30616"/>
    </ligand>
</feature>
<sequence length="193" mass="22473">MFIAIEGIDGAGKTTLARGIGNMLLGEGYRVYMTKEPTDGMENYAGDGVELFLKFTINRYAHQREIDRHIKNGEIVICDRYIRSSYAYQFEGIAEFFGNSEKAWEWMDSVSEIIKIRPDVQIYVDVDEETAMERISRRGLRNPHFENEQKLRSVRQIYKGFQWDLIVDGGRDKEAIISETFEKIIARLRQEKT</sequence>
<evidence type="ECO:0000255" key="1"/>
<evidence type="ECO:0000305" key="2"/>
<gene>
    <name type="primary">tmk</name>
    <name type="ordered locus">Ta0081</name>
</gene>
<accession>Q9HLZ2</accession>
<proteinExistence type="inferred from homology"/>
<name>KTHY_THEAC</name>
<dbReference type="EC" id="2.7.4.9"/>
<dbReference type="EMBL" id="AL445063">
    <property type="protein sequence ID" value="CAC11229.1"/>
    <property type="molecule type" value="Genomic_DNA"/>
</dbReference>
<dbReference type="RefSeq" id="WP_010900509.1">
    <property type="nucleotide sequence ID" value="NC_002578.1"/>
</dbReference>
<dbReference type="SMR" id="Q9HLZ2"/>
<dbReference type="FunCoup" id="Q9HLZ2">
    <property type="interactions" value="102"/>
</dbReference>
<dbReference type="STRING" id="273075.gene:9571296"/>
<dbReference type="PaxDb" id="273075-Ta0081"/>
<dbReference type="EnsemblBacteria" id="CAC11229">
    <property type="protein sequence ID" value="CAC11229"/>
    <property type="gene ID" value="CAC11229"/>
</dbReference>
<dbReference type="KEGG" id="tac:Ta0081"/>
<dbReference type="eggNOG" id="arCOG01891">
    <property type="taxonomic scope" value="Archaea"/>
</dbReference>
<dbReference type="HOGENOM" id="CLU_049131_1_3_2"/>
<dbReference type="InParanoid" id="Q9HLZ2"/>
<dbReference type="OrthoDB" id="43083at2157"/>
<dbReference type="Proteomes" id="UP000001024">
    <property type="component" value="Chromosome"/>
</dbReference>
<dbReference type="GO" id="GO:0005737">
    <property type="term" value="C:cytoplasm"/>
    <property type="evidence" value="ECO:0007669"/>
    <property type="project" value="TreeGrafter"/>
</dbReference>
<dbReference type="GO" id="GO:0005524">
    <property type="term" value="F:ATP binding"/>
    <property type="evidence" value="ECO:0007669"/>
    <property type="project" value="UniProtKB-UniRule"/>
</dbReference>
<dbReference type="GO" id="GO:0004798">
    <property type="term" value="F:dTMP kinase activity"/>
    <property type="evidence" value="ECO:0007669"/>
    <property type="project" value="UniProtKB-UniRule"/>
</dbReference>
<dbReference type="GO" id="GO:0006233">
    <property type="term" value="P:dTDP biosynthetic process"/>
    <property type="evidence" value="ECO:0007669"/>
    <property type="project" value="InterPro"/>
</dbReference>
<dbReference type="GO" id="GO:0006235">
    <property type="term" value="P:dTTP biosynthetic process"/>
    <property type="evidence" value="ECO:0007669"/>
    <property type="project" value="UniProtKB-UniRule"/>
</dbReference>
<dbReference type="GO" id="GO:0006227">
    <property type="term" value="P:dUDP biosynthetic process"/>
    <property type="evidence" value="ECO:0007669"/>
    <property type="project" value="TreeGrafter"/>
</dbReference>
<dbReference type="CDD" id="cd01672">
    <property type="entry name" value="TMPK"/>
    <property type="match status" value="1"/>
</dbReference>
<dbReference type="Gene3D" id="3.40.50.300">
    <property type="entry name" value="P-loop containing nucleotide triphosphate hydrolases"/>
    <property type="match status" value="1"/>
</dbReference>
<dbReference type="HAMAP" id="MF_00165">
    <property type="entry name" value="Thymidylate_kinase"/>
    <property type="match status" value="1"/>
</dbReference>
<dbReference type="InterPro" id="IPR027417">
    <property type="entry name" value="P-loop_NTPase"/>
</dbReference>
<dbReference type="InterPro" id="IPR039430">
    <property type="entry name" value="Thymidylate_kin-like_dom"/>
</dbReference>
<dbReference type="InterPro" id="IPR018095">
    <property type="entry name" value="Thymidylate_kin_CS"/>
</dbReference>
<dbReference type="InterPro" id="IPR018094">
    <property type="entry name" value="Thymidylate_kinase"/>
</dbReference>
<dbReference type="NCBIfam" id="TIGR00041">
    <property type="entry name" value="DTMP_kinase"/>
    <property type="match status" value="1"/>
</dbReference>
<dbReference type="PANTHER" id="PTHR10344">
    <property type="entry name" value="THYMIDYLATE KINASE"/>
    <property type="match status" value="1"/>
</dbReference>
<dbReference type="PANTHER" id="PTHR10344:SF4">
    <property type="entry name" value="UMP-CMP KINASE 2, MITOCHONDRIAL"/>
    <property type="match status" value="1"/>
</dbReference>
<dbReference type="Pfam" id="PF02223">
    <property type="entry name" value="Thymidylate_kin"/>
    <property type="match status" value="1"/>
</dbReference>
<dbReference type="SUPFAM" id="SSF52540">
    <property type="entry name" value="P-loop containing nucleoside triphosphate hydrolases"/>
    <property type="match status" value="1"/>
</dbReference>
<dbReference type="PROSITE" id="PS01331">
    <property type="entry name" value="THYMIDYLATE_KINASE"/>
    <property type="match status" value="1"/>
</dbReference>
<reference key="1">
    <citation type="journal article" date="2000" name="Nature">
        <title>The genome sequence of the thermoacidophilic scavenger Thermoplasma acidophilum.</title>
        <authorList>
            <person name="Ruepp A."/>
            <person name="Graml W."/>
            <person name="Santos-Martinez M.-L."/>
            <person name="Koretke K.K."/>
            <person name="Volker C."/>
            <person name="Mewes H.-W."/>
            <person name="Frishman D."/>
            <person name="Stocker S."/>
            <person name="Lupas A.N."/>
            <person name="Baumeister W."/>
        </authorList>
    </citation>
    <scope>NUCLEOTIDE SEQUENCE [LARGE SCALE GENOMIC DNA]</scope>
    <source>
        <strain>ATCC 25905 / DSM 1728 / JCM 9062 / NBRC 15155 / AMRC-C165</strain>
    </source>
</reference>
<protein>
    <recommendedName>
        <fullName>Probable thymidylate kinase</fullName>
        <ecNumber>2.7.4.9</ecNumber>
    </recommendedName>
    <alternativeName>
        <fullName>dTMP kinase</fullName>
    </alternativeName>
</protein>
<organism>
    <name type="scientific">Thermoplasma acidophilum (strain ATCC 25905 / DSM 1728 / JCM 9062 / NBRC 15155 / AMRC-C165)</name>
    <dbReference type="NCBI Taxonomy" id="273075"/>
    <lineage>
        <taxon>Archaea</taxon>
        <taxon>Methanobacteriati</taxon>
        <taxon>Thermoplasmatota</taxon>
        <taxon>Thermoplasmata</taxon>
        <taxon>Thermoplasmatales</taxon>
        <taxon>Thermoplasmataceae</taxon>
        <taxon>Thermoplasma</taxon>
    </lineage>
</organism>
<comment type="catalytic activity">
    <reaction>
        <text>dTMP + ATP = dTDP + ADP</text>
        <dbReference type="Rhea" id="RHEA:13517"/>
        <dbReference type="ChEBI" id="CHEBI:30616"/>
        <dbReference type="ChEBI" id="CHEBI:58369"/>
        <dbReference type="ChEBI" id="CHEBI:63528"/>
        <dbReference type="ChEBI" id="CHEBI:456216"/>
        <dbReference type="EC" id="2.7.4.9"/>
    </reaction>
</comment>
<comment type="similarity">
    <text evidence="2">Belongs to the thymidylate kinase family.</text>
</comment>